<name>UDG_ECO57</name>
<dbReference type="EC" id="1.1.1.22"/>
<dbReference type="EMBL" id="AE005174">
    <property type="protein sequence ID" value="AAG57087.1"/>
    <property type="molecule type" value="Genomic_DNA"/>
</dbReference>
<dbReference type="EMBL" id="BA000007">
    <property type="protein sequence ID" value="BAB36252.1"/>
    <property type="molecule type" value="Genomic_DNA"/>
</dbReference>
<dbReference type="RefSeq" id="NP_310856.1">
    <property type="nucleotide sequence ID" value="NC_002695.1"/>
</dbReference>
<dbReference type="RefSeq" id="WP_000704871.1">
    <property type="nucleotide sequence ID" value="NZ_VOAI01000013.1"/>
</dbReference>
<dbReference type="SMR" id="Q7DBF9"/>
<dbReference type="STRING" id="155864.Z3190"/>
<dbReference type="GeneID" id="913058"/>
<dbReference type="KEGG" id="ece:Z3190"/>
<dbReference type="KEGG" id="ecs:ECs_2829"/>
<dbReference type="PATRIC" id="fig|386585.9.peg.2964"/>
<dbReference type="eggNOG" id="COG1004">
    <property type="taxonomic scope" value="Bacteria"/>
</dbReference>
<dbReference type="HOGENOM" id="CLU_023810_2_0_6"/>
<dbReference type="OMA" id="LFMGFTE"/>
<dbReference type="UniPathway" id="UPA00030"/>
<dbReference type="UniPathway" id="UPA00038">
    <property type="reaction ID" value="UER00491"/>
</dbReference>
<dbReference type="Proteomes" id="UP000000558">
    <property type="component" value="Chromosome"/>
</dbReference>
<dbReference type="Proteomes" id="UP000002519">
    <property type="component" value="Chromosome"/>
</dbReference>
<dbReference type="GO" id="GO:0051287">
    <property type="term" value="F:NAD binding"/>
    <property type="evidence" value="ECO:0000250"/>
    <property type="project" value="UniProtKB"/>
</dbReference>
<dbReference type="GO" id="GO:0003979">
    <property type="term" value="F:UDP-glucose 6-dehydrogenase activity"/>
    <property type="evidence" value="ECO:0000250"/>
    <property type="project" value="UniProtKB"/>
</dbReference>
<dbReference type="GO" id="GO:0009103">
    <property type="term" value="P:lipopolysaccharide biosynthetic process"/>
    <property type="evidence" value="ECO:0007669"/>
    <property type="project" value="UniProtKB-UniPathway"/>
</dbReference>
<dbReference type="GO" id="GO:0006065">
    <property type="term" value="P:UDP-glucuronate biosynthetic process"/>
    <property type="evidence" value="ECO:0007669"/>
    <property type="project" value="UniProtKB-UniPathway"/>
</dbReference>
<dbReference type="FunFam" id="1.10.1040.10:FF:000026">
    <property type="entry name" value="UDP-glucose 6-dehydrogenase"/>
    <property type="match status" value="1"/>
</dbReference>
<dbReference type="FunFam" id="3.40.50.720:FF:000297">
    <property type="entry name" value="UDP-glucose 6-dehydrogenase"/>
    <property type="match status" value="1"/>
</dbReference>
<dbReference type="FunFam" id="3.40.50.720:FF:000400">
    <property type="entry name" value="UDP-glucose 6-dehydrogenase"/>
    <property type="match status" value="1"/>
</dbReference>
<dbReference type="Gene3D" id="1.10.1040.10">
    <property type="entry name" value="N-(1-d-carboxylethyl)-l-norvaline Dehydrogenase, domain 2"/>
    <property type="match status" value="1"/>
</dbReference>
<dbReference type="Gene3D" id="3.40.50.720">
    <property type="entry name" value="NAD(P)-binding Rossmann-like Domain"/>
    <property type="match status" value="2"/>
</dbReference>
<dbReference type="InterPro" id="IPR008927">
    <property type="entry name" value="6-PGluconate_DH-like_C_sf"/>
</dbReference>
<dbReference type="InterPro" id="IPR013328">
    <property type="entry name" value="6PGD_dom2"/>
</dbReference>
<dbReference type="InterPro" id="IPR036291">
    <property type="entry name" value="NAD(P)-bd_dom_sf"/>
</dbReference>
<dbReference type="InterPro" id="IPR017476">
    <property type="entry name" value="UDP-Glc/GDP-Man"/>
</dbReference>
<dbReference type="InterPro" id="IPR014027">
    <property type="entry name" value="UDP-Glc/GDP-Man_DH_C"/>
</dbReference>
<dbReference type="InterPro" id="IPR036220">
    <property type="entry name" value="UDP-Glc/GDP-Man_DH_C_sf"/>
</dbReference>
<dbReference type="InterPro" id="IPR014026">
    <property type="entry name" value="UDP-Glc/GDP-Man_DH_dimer"/>
</dbReference>
<dbReference type="InterPro" id="IPR001732">
    <property type="entry name" value="UDP-Glc/GDP-Man_DH_N"/>
</dbReference>
<dbReference type="InterPro" id="IPR028357">
    <property type="entry name" value="UDPglc_DH_bac"/>
</dbReference>
<dbReference type="NCBIfam" id="TIGR03026">
    <property type="entry name" value="NDP-sugDHase"/>
    <property type="match status" value="1"/>
</dbReference>
<dbReference type="NCBIfam" id="NF011631">
    <property type="entry name" value="PRK15057.1"/>
    <property type="match status" value="1"/>
</dbReference>
<dbReference type="PANTHER" id="PTHR43750:SF2">
    <property type="entry name" value="UDP-GLUCOSE 6-DEHYDROGENASE"/>
    <property type="match status" value="1"/>
</dbReference>
<dbReference type="PANTHER" id="PTHR43750">
    <property type="entry name" value="UDP-GLUCOSE 6-DEHYDROGENASE TUAD"/>
    <property type="match status" value="1"/>
</dbReference>
<dbReference type="Pfam" id="PF00984">
    <property type="entry name" value="UDPG_MGDP_dh"/>
    <property type="match status" value="1"/>
</dbReference>
<dbReference type="Pfam" id="PF03720">
    <property type="entry name" value="UDPG_MGDP_dh_C"/>
    <property type="match status" value="1"/>
</dbReference>
<dbReference type="Pfam" id="PF03721">
    <property type="entry name" value="UDPG_MGDP_dh_N"/>
    <property type="match status" value="1"/>
</dbReference>
<dbReference type="PIRSF" id="PIRSF500134">
    <property type="entry name" value="UDPglc_DH_bac"/>
    <property type="match status" value="1"/>
</dbReference>
<dbReference type="PIRSF" id="PIRSF000124">
    <property type="entry name" value="UDPglc_GDPman_dh"/>
    <property type="match status" value="1"/>
</dbReference>
<dbReference type="SMART" id="SM00984">
    <property type="entry name" value="UDPG_MGDP_dh_C"/>
    <property type="match status" value="1"/>
</dbReference>
<dbReference type="SUPFAM" id="SSF48179">
    <property type="entry name" value="6-phosphogluconate dehydrogenase C-terminal domain-like"/>
    <property type="match status" value="1"/>
</dbReference>
<dbReference type="SUPFAM" id="SSF51735">
    <property type="entry name" value="NAD(P)-binding Rossmann-fold domains"/>
    <property type="match status" value="1"/>
</dbReference>
<dbReference type="SUPFAM" id="SSF52413">
    <property type="entry name" value="UDP-glucose/GDP-mannose dehydrogenase C-terminal domain"/>
    <property type="match status" value="1"/>
</dbReference>
<keyword id="KW-0520">NAD</keyword>
<keyword id="KW-0560">Oxidoreductase</keyword>
<keyword id="KW-0597">Phosphoprotein</keyword>
<keyword id="KW-1185">Reference proteome</keyword>
<accession>Q7DBF9</accession>
<accession>Q7ACQ7</accession>
<reference key="1">
    <citation type="journal article" date="2001" name="Nature">
        <title>Genome sequence of enterohaemorrhagic Escherichia coli O157:H7.</title>
        <authorList>
            <person name="Perna N.T."/>
            <person name="Plunkett G. III"/>
            <person name="Burland V."/>
            <person name="Mau B."/>
            <person name="Glasner J.D."/>
            <person name="Rose D.J."/>
            <person name="Mayhew G.F."/>
            <person name="Evans P.S."/>
            <person name="Gregor J."/>
            <person name="Kirkpatrick H.A."/>
            <person name="Posfai G."/>
            <person name="Hackett J."/>
            <person name="Klink S."/>
            <person name="Boutin A."/>
            <person name="Shao Y."/>
            <person name="Miller L."/>
            <person name="Grotbeck E.J."/>
            <person name="Davis N.W."/>
            <person name="Lim A."/>
            <person name="Dimalanta E.T."/>
            <person name="Potamousis K."/>
            <person name="Apodaca J."/>
            <person name="Anantharaman T.S."/>
            <person name="Lin J."/>
            <person name="Yen G."/>
            <person name="Schwartz D.C."/>
            <person name="Welch R.A."/>
            <person name="Blattner F.R."/>
        </authorList>
    </citation>
    <scope>NUCLEOTIDE SEQUENCE [LARGE SCALE GENOMIC DNA]</scope>
    <source>
        <strain>O157:H7 / EDL933 / ATCC 700927 / EHEC</strain>
    </source>
</reference>
<reference key="2">
    <citation type="journal article" date="2001" name="DNA Res.">
        <title>Complete genome sequence of enterohemorrhagic Escherichia coli O157:H7 and genomic comparison with a laboratory strain K-12.</title>
        <authorList>
            <person name="Hayashi T."/>
            <person name="Makino K."/>
            <person name="Ohnishi M."/>
            <person name="Kurokawa K."/>
            <person name="Ishii K."/>
            <person name="Yokoyama K."/>
            <person name="Han C.-G."/>
            <person name="Ohtsubo E."/>
            <person name="Nakayama K."/>
            <person name="Murata T."/>
            <person name="Tanaka M."/>
            <person name="Tobe T."/>
            <person name="Iida T."/>
            <person name="Takami H."/>
            <person name="Honda T."/>
            <person name="Sasakawa C."/>
            <person name="Ogasawara N."/>
            <person name="Yasunaga T."/>
            <person name="Kuhara S."/>
            <person name="Shiba T."/>
            <person name="Hattori M."/>
            <person name="Shinagawa H."/>
        </authorList>
    </citation>
    <scope>NUCLEOTIDE SEQUENCE [LARGE SCALE GENOMIC DNA]</scope>
    <source>
        <strain>O157:H7 / Sakai / RIMD 0509952 / EHEC</strain>
    </source>
</reference>
<proteinExistence type="inferred from homology"/>
<feature type="chain" id="PRO_0000074042" description="UDP-glucose 6-dehydrogenase">
    <location>
        <begin position="1"/>
        <end position="388"/>
    </location>
</feature>
<feature type="active site" description="Nucleophile" evidence="2">
    <location>
        <position position="253"/>
    </location>
</feature>
<feature type="binding site" evidence="3">
    <location>
        <begin position="2"/>
        <end position="19"/>
    </location>
    <ligand>
        <name>NAD(+)</name>
        <dbReference type="ChEBI" id="CHEBI:57540"/>
    </ligand>
</feature>
<feature type="binding site" evidence="2">
    <location>
        <position position="11"/>
    </location>
    <ligand>
        <name>NAD(+)</name>
        <dbReference type="ChEBI" id="CHEBI:57540"/>
    </ligand>
</feature>
<feature type="binding site" evidence="2">
    <location>
        <position position="29"/>
    </location>
    <ligand>
        <name>NAD(+)</name>
        <dbReference type="ChEBI" id="CHEBI:57540"/>
    </ligand>
</feature>
<feature type="binding site" evidence="2">
    <location>
        <position position="83"/>
    </location>
    <ligand>
        <name>NAD(+)</name>
        <dbReference type="ChEBI" id="CHEBI:57540"/>
    </ligand>
</feature>
<feature type="binding site" evidence="2">
    <location>
        <position position="118"/>
    </location>
    <ligand>
        <name>NAD(+)</name>
        <dbReference type="ChEBI" id="CHEBI:57540"/>
    </ligand>
</feature>
<feature type="binding site" evidence="2">
    <location>
        <begin position="141"/>
        <end position="145"/>
    </location>
    <ligand>
        <name>substrate</name>
    </ligand>
</feature>
<feature type="binding site" evidence="2">
    <location>
        <position position="145"/>
    </location>
    <ligand>
        <name>NAD(+)</name>
        <dbReference type="ChEBI" id="CHEBI:57540"/>
    </ligand>
</feature>
<feature type="binding site" evidence="2">
    <location>
        <position position="197"/>
    </location>
    <ligand>
        <name>substrate</name>
    </ligand>
</feature>
<feature type="binding site" evidence="2">
    <location>
        <position position="201"/>
    </location>
    <ligand>
        <name>substrate</name>
    </ligand>
</feature>
<feature type="binding site" evidence="2">
    <location>
        <begin position="242"/>
        <end position="246"/>
    </location>
    <ligand>
        <name>substrate</name>
    </ligand>
</feature>
<feature type="binding site" evidence="2">
    <location>
        <position position="250"/>
    </location>
    <ligand>
        <name>substrate</name>
    </ligand>
</feature>
<feature type="binding site" evidence="2">
    <location>
        <position position="252"/>
    </location>
    <ligand>
        <name>NAD(+)</name>
        <dbReference type="ChEBI" id="CHEBI:57540"/>
    </ligand>
</feature>
<feature type="binding site" evidence="2">
    <location>
        <position position="256"/>
    </location>
    <ligand>
        <name>NAD(+)</name>
        <dbReference type="ChEBI" id="CHEBI:57540"/>
    </ligand>
</feature>
<feature type="binding site" evidence="2">
    <location>
        <position position="307"/>
    </location>
    <ligand>
        <name>substrate</name>
    </ligand>
</feature>
<feature type="binding site" evidence="2">
    <location>
        <position position="314"/>
    </location>
    <ligand>
        <name>NAD(+)</name>
        <dbReference type="ChEBI" id="CHEBI:57540"/>
    </ligand>
</feature>
<protein>
    <recommendedName>
        <fullName>UDP-glucose 6-dehydrogenase</fullName>
        <shortName>UDP-Glc dehydrogenase</shortName>
        <shortName>UDP-GlcDH</shortName>
        <shortName>UDPGDH</shortName>
        <ecNumber>1.1.1.22</ecNumber>
    </recommendedName>
</protein>
<sequence length="388" mass="43713">MKITISGTGYVGLSNGLLIAQNHEVVALDILPSRVAMLNDRISPIVDKEIQQFLQSDKIHFNATLDKNEAYRDADYVIIATPTDYDPKTNYFNTSSVESVIKDVVEINPYAVMVIKSTVPVGFTEAMHKKYRTENIIFSPEFLREGKALYDNLHPSRIVIGERSERAERFAALLQEGAIKQNIPTLFTDSTEAEAIKLFANTYLAMRVAYFNELDSYAESLGLNSRQIIEGVCLDPRIGNHYNNPSFGYGGYCLPKDTKQLLANYQSVPNNLISAIVDANRTRKDFIADAILSRKPQVVGIYRLIMKSGSDNFRASSIQGIMKRIKAKGVEVIIYEPVMKEDSFFNSRLERDLATFKQQADVIISNRMAEELRDVADKVYTRDLFGSD</sequence>
<evidence type="ECO:0000250" key="1"/>
<evidence type="ECO:0000250" key="2">
    <source>
        <dbReference type="UniProtKB" id="Q0P8H3"/>
    </source>
</evidence>
<evidence type="ECO:0000255" key="3"/>
<evidence type="ECO:0000305" key="4"/>
<comment type="catalytic activity">
    <reaction>
        <text>UDP-alpha-D-glucose + 2 NAD(+) + H2O = UDP-alpha-D-glucuronate + 2 NADH + 3 H(+)</text>
        <dbReference type="Rhea" id="RHEA:23596"/>
        <dbReference type="ChEBI" id="CHEBI:15377"/>
        <dbReference type="ChEBI" id="CHEBI:15378"/>
        <dbReference type="ChEBI" id="CHEBI:57540"/>
        <dbReference type="ChEBI" id="CHEBI:57945"/>
        <dbReference type="ChEBI" id="CHEBI:58052"/>
        <dbReference type="ChEBI" id="CHEBI:58885"/>
        <dbReference type="EC" id="1.1.1.22"/>
    </reaction>
</comment>
<comment type="pathway">
    <text>Nucleotide-sugar biosynthesis; UDP-alpha-D-glucuronate biosynthesis; UDP-alpha-D-glucuronate from UDP-alpha-D-glucose: step 1/1.</text>
</comment>
<comment type="pathway">
    <text>Bacterial outer membrane biogenesis; lipopolysaccharide biosynthesis.</text>
</comment>
<comment type="PTM">
    <text evidence="1">Phosphorylated on a tyrosine residue. It results in a significant increase of the dehydrogenase activity (By similarity).</text>
</comment>
<comment type="similarity">
    <text evidence="4">Belongs to the UDP-glucose/GDP-mannose dehydrogenase family.</text>
</comment>
<gene>
    <name type="primary">ugd</name>
    <name type="ordered locus">Z3190</name>
    <name type="ordered locus">ECs2829</name>
</gene>
<organism>
    <name type="scientific">Escherichia coli O157:H7</name>
    <dbReference type="NCBI Taxonomy" id="83334"/>
    <lineage>
        <taxon>Bacteria</taxon>
        <taxon>Pseudomonadati</taxon>
        <taxon>Pseudomonadota</taxon>
        <taxon>Gammaproteobacteria</taxon>
        <taxon>Enterobacterales</taxon>
        <taxon>Enterobacteriaceae</taxon>
        <taxon>Escherichia</taxon>
    </lineage>
</organism>